<reference key="1">
    <citation type="journal article" date="2006" name="Proc. Natl. Acad. Sci. U.S.A.">
        <title>The complete genome of Rhodococcus sp. RHA1 provides insights into a catabolic powerhouse.</title>
        <authorList>
            <person name="McLeod M.P."/>
            <person name="Warren R.L."/>
            <person name="Hsiao W.W.L."/>
            <person name="Araki N."/>
            <person name="Myhre M."/>
            <person name="Fernandes C."/>
            <person name="Miyazawa D."/>
            <person name="Wong W."/>
            <person name="Lillquist A.L."/>
            <person name="Wang D."/>
            <person name="Dosanjh M."/>
            <person name="Hara H."/>
            <person name="Petrescu A."/>
            <person name="Morin R.D."/>
            <person name="Yang G."/>
            <person name="Stott J.M."/>
            <person name="Schein J.E."/>
            <person name="Shin H."/>
            <person name="Smailus D."/>
            <person name="Siddiqui A.S."/>
            <person name="Marra M.A."/>
            <person name="Jones S.J.M."/>
            <person name="Holt R."/>
            <person name="Brinkman F.S.L."/>
            <person name="Miyauchi K."/>
            <person name="Fukuda M."/>
            <person name="Davies J.E."/>
            <person name="Mohn W.W."/>
            <person name="Eltis L.D."/>
        </authorList>
    </citation>
    <scope>NUCLEOTIDE SEQUENCE [LARGE SCALE GENOMIC DNA]</scope>
    <source>
        <strain>RHA1</strain>
    </source>
</reference>
<comment type="subunit">
    <text evidence="1">Part of the 50S ribosomal subunit. Contacts protein L32.</text>
</comment>
<comment type="similarity">
    <text evidence="1">Belongs to the bacterial ribosomal protein bL17 family.</text>
</comment>
<dbReference type="EMBL" id="CP000431">
    <property type="protein sequence ID" value="ABG97940.1"/>
    <property type="molecule type" value="Genomic_DNA"/>
</dbReference>
<dbReference type="RefSeq" id="WP_011598158.1">
    <property type="nucleotide sequence ID" value="NC_008268.1"/>
</dbReference>
<dbReference type="SMR" id="Q0S3E6"/>
<dbReference type="KEGG" id="rha:RHA1_ro06163"/>
<dbReference type="PATRIC" id="fig|101510.16.peg.6212"/>
<dbReference type="eggNOG" id="COG0203">
    <property type="taxonomic scope" value="Bacteria"/>
</dbReference>
<dbReference type="HOGENOM" id="CLU_074407_0_0_11"/>
<dbReference type="OrthoDB" id="9809073at2"/>
<dbReference type="Proteomes" id="UP000008710">
    <property type="component" value="Chromosome"/>
</dbReference>
<dbReference type="GO" id="GO:0022625">
    <property type="term" value="C:cytosolic large ribosomal subunit"/>
    <property type="evidence" value="ECO:0007669"/>
    <property type="project" value="TreeGrafter"/>
</dbReference>
<dbReference type="GO" id="GO:0003735">
    <property type="term" value="F:structural constituent of ribosome"/>
    <property type="evidence" value="ECO:0007669"/>
    <property type="project" value="InterPro"/>
</dbReference>
<dbReference type="GO" id="GO:0006412">
    <property type="term" value="P:translation"/>
    <property type="evidence" value="ECO:0007669"/>
    <property type="project" value="UniProtKB-UniRule"/>
</dbReference>
<dbReference type="FunFam" id="3.90.1030.10:FF:000001">
    <property type="entry name" value="50S ribosomal protein L17"/>
    <property type="match status" value="1"/>
</dbReference>
<dbReference type="Gene3D" id="3.90.1030.10">
    <property type="entry name" value="Ribosomal protein L17"/>
    <property type="match status" value="1"/>
</dbReference>
<dbReference type="HAMAP" id="MF_01368">
    <property type="entry name" value="Ribosomal_bL17"/>
    <property type="match status" value="1"/>
</dbReference>
<dbReference type="InterPro" id="IPR000456">
    <property type="entry name" value="Ribosomal_bL17"/>
</dbReference>
<dbReference type="InterPro" id="IPR047859">
    <property type="entry name" value="Ribosomal_bL17_CS"/>
</dbReference>
<dbReference type="InterPro" id="IPR036373">
    <property type="entry name" value="Ribosomal_bL17_sf"/>
</dbReference>
<dbReference type="NCBIfam" id="TIGR00059">
    <property type="entry name" value="L17"/>
    <property type="match status" value="1"/>
</dbReference>
<dbReference type="PANTHER" id="PTHR14413:SF16">
    <property type="entry name" value="LARGE RIBOSOMAL SUBUNIT PROTEIN BL17M"/>
    <property type="match status" value="1"/>
</dbReference>
<dbReference type="PANTHER" id="PTHR14413">
    <property type="entry name" value="RIBOSOMAL PROTEIN L17"/>
    <property type="match status" value="1"/>
</dbReference>
<dbReference type="Pfam" id="PF01196">
    <property type="entry name" value="Ribosomal_L17"/>
    <property type="match status" value="1"/>
</dbReference>
<dbReference type="SUPFAM" id="SSF64263">
    <property type="entry name" value="Prokaryotic ribosomal protein L17"/>
    <property type="match status" value="1"/>
</dbReference>
<dbReference type="PROSITE" id="PS01167">
    <property type="entry name" value="RIBOSOMAL_L17"/>
    <property type="match status" value="1"/>
</dbReference>
<organism>
    <name type="scientific">Rhodococcus jostii (strain RHA1)</name>
    <dbReference type="NCBI Taxonomy" id="101510"/>
    <lineage>
        <taxon>Bacteria</taxon>
        <taxon>Bacillati</taxon>
        <taxon>Actinomycetota</taxon>
        <taxon>Actinomycetes</taxon>
        <taxon>Mycobacteriales</taxon>
        <taxon>Nocardiaceae</taxon>
        <taxon>Rhodococcus</taxon>
    </lineage>
</organism>
<evidence type="ECO:0000255" key="1">
    <source>
        <dbReference type="HAMAP-Rule" id="MF_01368"/>
    </source>
</evidence>
<evidence type="ECO:0000305" key="2"/>
<keyword id="KW-0687">Ribonucleoprotein</keyword>
<keyword id="KW-0689">Ribosomal protein</keyword>
<protein>
    <recommendedName>
        <fullName evidence="1">Large ribosomal subunit protein bL17</fullName>
    </recommendedName>
    <alternativeName>
        <fullName evidence="2">50S ribosomal protein L17</fullName>
    </alternativeName>
</protein>
<gene>
    <name evidence="1" type="primary">rplQ</name>
    <name type="ordered locus">RHA1_ro06163</name>
</gene>
<proteinExistence type="inferred from homology"/>
<name>RL17_RHOJR</name>
<sequence length="189" mass="20328">MPKPKKGARFGGSASHQKAIFANLATALFEHGRITTTESKAKALRPYAEKLVTHAKAGTLAHRREVLKVIRNKDVVHTLFAEIGPFYADRDGGYTRIIKTVPRKGDNAPMAIIELVKEKTVTSEADRARRVKASQDAPAAAPAEENVVEAVEAEATDAEVENADAVVEAIEDETATAADAPEAEEAKKD</sequence>
<accession>Q0S3E6</accession>
<feature type="chain" id="PRO_1000055929" description="Large ribosomal subunit protein bL17">
    <location>
        <begin position="1"/>
        <end position="189"/>
    </location>
</feature>